<reference key="1">
    <citation type="submission" date="2004-12" db="EMBL/GenBank/DDBJ databases">
        <authorList>
            <consortium name="NIH - Xenopus Gene Collection (XGC) project"/>
        </authorList>
    </citation>
    <scope>NUCLEOTIDE SEQUENCE [LARGE SCALE MRNA]</scope>
</reference>
<gene>
    <name type="primary">rgs1</name>
</gene>
<name>RGS1_XENTR</name>
<feature type="chain" id="PRO_0000364206" description="Regulator of G-protein signaling 1">
    <location>
        <begin position="1"/>
        <end position="201"/>
    </location>
</feature>
<feature type="domain" description="RGS" evidence="3">
    <location>
        <begin position="75"/>
        <end position="191"/>
    </location>
</feature>
<dbReference type="EMBL" id="BC087970">
    <property type="protein sequence ID" value="AAH87970.1"/>
    <property type="molecule type" value="mRNA"/>
</dbReference>
<dbReference type="RefSeq" id="XP_002939124.2">
    <property type="nucleotide sequence ID" value="XM_002939078.2"/>
</dbReference>
<dbReference type="SMR" id="Q5M8L6"/>
<dbReference type="FunCoup" id="Q5M8L6">
    <property type="interactions" value="470"/>
</dbReference>
<dbReference type="STRING" id="8364.ENSXETP00000022864"/>
<dbReference type="PaxDb" id="8364-ENSXETP00000012507"/>
<dbReference type="GeneID" id="496714"/>
<dbReference type="KEGG" id="xtr:496714"/>
<dbReference type="AGR" id="Xenbase:XB-GENE-968765"/>
<dbReference type="CTD" id="5996"/>
<dbReference type="Xenbase" id="XB-GENE-968765">
    <property type="gene designation" value="rgs1"/>
</dbReference>
<dbReference type="eggNOG" id="KOG3589">
    <property type="taxonomic scope" value="Eukaryota"/>
</dbReference>
<dbReference type="HOGENOM" id="CLU_059863_3_3_1"/>
<dbReference type="InParanoid" id="Q5M8L6"/>
<dbReference type="OrthoDB" id="196547at2759"/>
<dbReference type="Reactome" id="R-XTR-416476">
    <property type="pathway name" value="G alpha (q) signalling events"/>
</dbReference>
<dbReference type="Reactome" id="R-XTR-418594">
    <property type="pathway name" value="G alpha (i) signalling events"/>
</dbReference>
<dbReference type="Proteomes" id="UP000008143">
    <property type="component" value="Chromosome 4"/>
</dbReference>
<dbReference type="ExpressionAtlas" id="Q5M8L6">
    <property type="expression patterns" value="baseline and differential"/>
</dbReference>
<dbReference type="GO" id="GO:0005829">
    <property type="term" value="C:cytosol"/>
    <property type="evidence" value="ECO:0007669"/>
    <property type="project" value="UniProtKB-SubCell"/>
</dbReference>
<dbReference type="GO" id="GO:0005886">
    <property type="term" value="C:plasma membrane"/>
    <property type="evidence" value="ECO:0007669"/>
    <property type="project" value="UniProtKB-SubCell"/>
</dbReference>
<dbReference type="GO" id="GO:0005096">
    <property type="term" value="F:GTPase activator activity"/>
    <property type="evidence" value="ECO:0007669"/>
    <property type="project" value="UniProtKB-KW"/>
</dbReference>
<dbReference type="FunFam" id="1.10.167.10:FF:000001">
    <property type="entry name" value="Putative regulator of g-protein signaling 12"/>
    <property type="match status" value="1"/>
</dbReference>
<dbReference type="Gene3D" id="1.10.196.10">
    <property type="match status" value="2"/>
</dbReference>
<dbReference type="Gene3D" id="1.10.167.10">
    <property type="entry name" value="Regulator of G-protein Signalling 4, domain 2"/>
    <property type="match status" value="1"/>
</dbReference>
<dbReference type="InterPro" id="IPR016137">
    <property type="entry name" value="RGS"/>
</dbReference>
<dbReference type="InterPro" id="IPR036305">
    <property type="entry name" value="RGS_sf"/>
</dbReference>
<dbReference type="InterPro" id="IPR024066">
    <property type="entry name" value="RGS_subdom1/3"/>
</dbReference>
<dbReference type="InterPro" id="IPR044926">
    <property type="entry name" value="RGS_subdomain_2"/>
</dbReference>
<dbReference type="PANTHER" id="PTHR10845">
    <property type="entry name" value="REGULATOR OF G PROTEIN SIGNALING"/>
    <property type="match status" value="1"/>
</dbReference>
<dbReference type="PANTHER" id="PTHR10845:SF34">
    <property type="entry name" value="REGULATOR OF G-PROTEIN SIGNALING 1"/>
    <property type="match status" value="1"/>
</dbReference>
<dbReference type="Pfam" id="PF00615">
    <property type="entry name" value="RGS"/>
    <property type="match status" value="1"/>
</dbReference>
<dbReference type="PRINTS" id="PR01301">
    <property type="entry name" value="RGSPROTEIN"/>
</dbReference>
<dbReference type="SMART" id="SM00315">
    <property type="entry name" value="RGS"/>
    <property type="match status" value="1"/>
</dbReference>
<dbReference type="SUPFAM" id="SSF48097">
    <property type="entry name" value="Regulator of G-protein signaling, RGS"/>
    <property type="match status" value="1"/>
</dbReference>
<dbReference type="PROSITE" id="PS50132">
    <property type="entry name" value="RGS"/>
    <property type="match status" value="1"/>
</dbReference>
<organism>
    <name type="scientific">Xenopus tropicalis</name>
    <name type="common">Western clawed frog</name>
    <name type="synonym">Silurana tropicalis</name>
    <dbReference type="NCBI Taxonomy" id="8364"/>
    <lineage>
        <taxon>Eukaryota</taxon>
        <taxon>Metazoa</taxon>
        <taxon>Chordata</taxon>
        <taxon>Craniata</taxon>
        <taxon>Vertebrata</taxon>
        <taxon>Euteleostomi</taxon>
        <taxon>Amphibia</taxon>
        <taxon>Batrachia</taxon>
        <taxon>Anura</taxon>
        <taxon>Pipoidea</taxon>
        <taxon>Pipidae</taxon>
        <taxon>Xenopodinae</taxon>
        <taxon>Xenopus</taxon>
        <taxon>Silurana</taxon>
    </lineage>
</organism>
<keyword id="KW-1003">Cell membrane</keyword>
<keyword id="KW-0963">Cytoplasm</keyword>
<keyword id="KW-0343">GTPase activation</keyword>
<keyword id="KW-0472">Membrane</keyword>
<keyword id="KW-1185">Reference proteome</keyword>
<accession>Q5M8L6</accession>
<sequence length="201" mass="23331">MPGIFFSHANALKEVDNKPDEVMAQKKKNFAVDLKNYLKSMLPHLETMKSSSSTSSSDSEKNKLTPDEIIQWTMSLEKLLISEDGQSVFREFLKSEFSEENIEFWLACEDYKATNDSEELRCKANVIYQEFIQPNANKQINIDFSTRNSVTKDLLEPTITTFNDAQKMIFILMERDSYPRFLKSEIFLRLAERHHGNNVRG</sequence>
<protein>
    <recommendedName>
        <fullName>Regulator of G-protein signaling 1</fullName>
        <shortName>RGS1</shortName>
    </recommendedName>
</protein>
<evidence type="ECO:0000250" key="1">
    <source>
        <dbReference type="UniProtKB" id="Q08116"/>
    </source>
</evidence>
<evidence type="ECO:0000250" key="2">
    <source>
        <dbReference type="UniProtKB" id="Q9JL25"/>
    </source>
</evidence>
<evidence type="ECO:0000255" key="3">
    <source>
        <dbReference type="PROSITE-ProRule" id="PRU00171"/>
    </source>
</evidence>
<proteinExistence type="evidence at transcript level"/>
<comment type="function">
    <text evidence="1 2">Regulates G protein-coupled receptor signaling cascades, including signaling downstream of the N-formylpeptide chemoattractant receptors and leukotriene receptors. Inhibits B cell chemotaxis (By similarity). Inhibits signal transduction by increasing the GTPase activity of G protein alpha subunits, thereby driving them into their inactive GDP-bound form (By similarity).</text>
</comment>
<comment type="subcellular location">
    <subcellularLocation>
        <location evidence="1">Cell membrane</location>
        <topology evidence="1">Peripheral membrane protein</topology>
        <orientation evidence="1">Cytoplasmic side</orientation>
    </subcellularLocation>
    <subcellularLocation>
        <location evidence="1">Cytoplasm</location>
        <location evidence="1">Cytosol</location>
    </subcellularLocation>
</comment>